<gene>
    <name type="primary">DHC10</name>
    <name type="synonym">IDA2</name>
</gene>
<protein>
    <recommendedName>
        <fullName>Dynein-1-beta heavy chain, flagellar inner arm I1 complex</fullName>
    </recommendedName>
    <alternativeName>
        <fullName>1-beta DHC</fullName>
    </alternativeName>
    <alternativeName>
        <fullName>Dynein-1, subspecies f</fullName>
    </alternativeName>
</protein>
<evidence type="ECO:0000250" key="1"/>
<evidence type="ECO:0000255" key="2"/>
<evidence type="ECO:0000269" key="3">
    <source>
    </source>
</evidence>
<evidence type="ECO:0000269" key="4">
    <source>
    </source>
</evidence>
<evidence type="ECO:0000269" key="5">
    <source>
    </source>
</evidence>
<sequence length="4513" mass="510667">MEPGDEGKGHQLTADATCIAWVRSKLQLLKPESLGDSDGAEWLSSVWHNDVHTPVVSTFLMSVKATRMFAALDGGHEGGSSPKLVLALEVPKQFEQMVYFVRDPSKFVTRENVGSVIFFGVMRGGDPLHSLLNIMHGLYVPVVVANTTWPETVKSDFTAQMHKFMANLTETVYEVKGKTILYIPQEDLRDPKAAAKQKDLVQRLESTIIHWTRQVKELLNQQDSVDASEQAGPLAEIEFWRERSVDLSGIRAQLDDGAVSSIVSVLEYAKSSYLAPFLSLRNLIHREAVAAEDNLKFLLCLEEPCQQLASAHPQTIPSLLPPILNCIRMVWNLSRFYNTPERLSVLLRKLSNEIINRCCSVISLPDVWSGDVDNVMVALRQSMEAGERWKELYKRTAAAVAVRSPKPWDFDISSIFAHIDAFLQRCNDLLEVCEAQLQFAPRTPLPVFGGTYGPEVKKSILDIQESFQGLVQGLQALKYDILDVKATRWHDDFNGFKGGVKDLEVMMANVIQRAFDTQPCLAARGELLEGFQTMAKRDYIRRFVEKKTVEFFALFNAEINTVKKLFDAVKRSQPKSPILPRYAGLAKYAMNLMRRLEQSHKVVDSVRYTLPQVSEAADVMQQYELAHQAIEQYISNTHNDWFSTIESSIAKELQACLLTQDKASGGLLSMNFHKDLLSMGQEVHFWERMRLAVPLVAMEINAQREKYRVLRDNILMVVRDYNKILTALDKEERKLFHDRIRYLDRRIMPGVTKLQWTADKHALEFYYREARKFCRDADMAVGDYKTANSRLDAICRSISELVLVDVEKKKIYQHAEFANLQESHHAKIKDRLVSAVDEIRDIMASIHRVFEQDSEEVQREWVRFTQKVDRKLEDALRHVIKKSLQELSRLLNGDNKTEVMPIFHVTMVLERTNRVELRPTIQALFDTINSVARNLILVLQSVPRVALQLTDKQRRDMEDAGLPLPKPLPTLYETISADEDAVLRTIMQITSGITSIIDKVQAFLTYWEKKYRQVWEADRDAYIRRYEKAQKPLSSFEADISRYLQCIDEIRGEDGATNMRFLRIDCGPLKLTLVGHCEAWVSKFTGLLGQLAATELRTLHTYFRENKDSLMLAPSTLEQLAELVGLHRRLADERRRTEARFEPLRDKYKLLERYEVGAKEEEAALLEGLEPAWTQFQALLDETAGKLERYKDNFREKVKSLLDTFLKDVAQLCEDFSRDAPYSSEVPTPDALDFIQASKQADEDTRKRAAEIKNGMDIFNIPQPQYKDLAAMEKDLDFLDRIWGLKDEWEQLYYGWKDGSFTDIKVEEMEEAAVRIGKNVAKLGRDIRQWTVWSSLKDTLDAFKRTMPLITDLRNPAMRPRHWQNLQDHIGVRFDPHSRDFTLDSLVALRLDQHVEFVAELSVNATKELAIENNIKAIAATWSALGLDMAEYKSTFKLRSTEEIFTSLEENIVTLSTMKASKYFIVFEKDIAYWEKTLSHISETIEIILQVQRNWMYLENIFIGSEDIRKQLPQESQMFDAVHNNFMRLMKQLYSTANCLKACTAQGLLESFQDMNNKLERIQKSLDNYLENKRQQFPRFYFLSSDDLLEILGQAKDPLNVQPHLKKCFEGIKKLDMHLPGEDRKQTISVGITSPDGEYLPFANPVITEGRPEEWLNRVEDAMFLTTKKHLYKVLEESKAQKKEKWVKENQGQMIITAGQIVWTHECEKALADADSARKNLKLLKKKWISYLNKLTAVTRSKLNKIERNKVVALITIEVHARDVIEKLGKSNCSSTNDFEWVSQLRFYWDREKNDCIVKQVLSVFYYGYEYQGNNGRLVITPLTDRCYMTLGAAMFTRRGGNPLGPAGTGKTETVKDFGKALARYVIVFNCSDGVDYKMTGKMFSGLAQTGAWACLDEFNRIEVEVLSVVATQIAAVMQAIKESKKRFLFLGQEIRLNPSCGIFVTMNPGYAGRSELPDNLKAMLRPVSMMVPDFTLIAEIMMFSEGFSSAKVLAKKMIAIMELSQQQLSKQDHYDYGLRSFVIPIARAAGSLKRLDPEGSEEVILYRTMLDLIKPKLVYLDLPLFMALLSDLFPGVELPPADGGSLRRAIEAELRESNLQIVPEFVTKIIQVFDCKVARHGNMIVGRTGSGKSEAWKCLQRALGRLRKEEPDDDRFQKVHVHTINPLALSNDELYGCFEAATHEWQDGVLARIMRTVCKDETHEQKWILFDGPVDTLWIESMNTTLDDNKLLTLLSGERIAMTPAVSLLFEVEDLSQASPATVSRAGMIYLNVEDLGWRPFITSWLAAKQAAPGADAAIIDQVSKLVDKYMEAALEHKRLHCRELVPTDRLSCVRAFTRLWDALAVPENGVGTMPVDESAGPPGSKAAAAAAAAAAAAAPPEETSGGTGGNLVEMWFLFCLIWGIGGPLDEEGRKKFDAFMREMDTRYPSSDTVFEYFVEPKAKSWLAWETKLTGAFKPAMDQPFFKILVPTVDTVRNRFVGSALVRVSQHTLIVGNVGVGKTMIVGSLLEGLPGDRMSSMTINFSAQTSSNSLQDTIEGKLEKRTKGVFAPAGGKRLVCFIDDLNMPQKSKFGFIPPLELLKLWVDNGFWYDRAKCEVKHIKDMQLLAAMAPPGGGRNAFSQRVQACFATLNVTAPNDNQLKRIFGTILNAKLADFDDEVKPLSEPITMATIGIYRAVSKELLPTPSKSHYLFNTRDLAKIIQGMMQATKAFYNSKEEVLQLWCHECMRIIADRMWDHADKEWLVRQLDEKLGTTFSTSFGTLFEAYNETVPPFVTFMRQNVDVPVYEAVRDMVALKDLLTERLEDYALEPGHSAMDLVLFRDALSHVCRIHRILGQPRGNALLVGVGGSGRKSLARLAAFVAELKCFTIEITKNYRQTEFREDLKGLYRQAGVANKPTVFLFDETQIVYETFLEDVNNILTSGEVPNLFPKDELGSVLDELRPAAKAAGAGETADALYGFLLERVRTNLHVVLCLSPVGEAFRERCRMFPGLVNCTTIDWFTEWPADALFEVAQKQLMDVDLGSTEVKTAVCKVFVTAHQSVENTSAKMFAALKRRNYVTPTNYLETVRGYKGLLAEKRTELGEKAAKLQGGLHKLDETSVQVAAMKKVAEEKKVVVAQAKADCEELLVEIVQDKRVADEQEKQVNAEAQKIGKEAEEANIIAAQVQQELDKALPALREAEAALDVLTKKDMSELKAYAKPPEKVEMTLNAVLTVLRRPPNWDEAKKRLSDANFMQSLKEFDKDKLDDSLLKKIGKFTANPDFTYEKINTVSAAASGMCKWVHAMETYGYVAKDVAPKRAKLKSAQDTLARKQAALALAQEQLAVVLAKVQALKDKYDTSIARKQALEEELADLEGKLERAEKLVTGLAGERVRWEASISEYNIALGCLPGDVVVAAAFMSYAGPFPSEYRDELVKHTWLPQVKALNIPASEHFDFALFLANPAMVRDWNIQGLPSDSFSTENGVMVTRGRRWPLMIDPQGQANKWIKNMEGRGGRLKVLNLQMSDMARQIENAIQFGQPVLMQDILQEIDPILEPVLAKSFIKRGNQTLIKLGDKEVDYNFDFRLYLTTKLANPLYTPEISTKVMIVNFAVKEQGLEAQLLATVVKNERPDLDKQKNDLVVKVAAGKRTQAELEDTILHLLSTATGSLLDNVTLINTLDQSKTTWEEVNASLAVAEETQKKIEAASQLYRPCSVRASVLYFVLNDLSTIDPMYQFSLDAYNDLFLLSIKNSPKNDNLAERIKSLNDFHTYAVYKYTSRGLFERHKLLLSLQMCVRILQTANQVNTEEWQFFLRGGTVLDRSSQPNNPSQEWISEEAWDNITELDALPNFKGVVSSFESNLGEWEAWYRKGDPEASELPAEWESKCNELQRLILVRCLRPDRVIFAATTYVSNALGRKYVEPPVLDLAETLKDSTALSPLIFVLSAGVDPTDNLRKLATEKGMTSRFFTVALGQGQAPTATRLIEDGLREGNWVFLANCHLMTSWLPTLDKIIEGFETKQPHENFRLWLSSNPSPSFPIAILQRGIKMTTEPPKGLRANLLRLYNSVSDASYAQCKTQIKYQKLLFALTYFHSVLLERRKFRTLGFNIPYDFNDTDFSVSDDLLKSYLDSYEQTPWDALKYLIAEANYGGRVTDELDRRVLASYLNKFYCEDALAVPGYLLSPLSTYYVPENGPLQSFKDYILTLPAGDRPEAFGQHPNAEISYLIEDSKVLLDSLLSLQPRTEGAAGGAGTRREDVVMAIATDLLDQVPQPFNLEEVMKAKADDPSALHVVLFQEVERYNALLVAVRRSCVELQRGIKGLVVMSADLDLIFESLYAAKVPAAWLKTYPSLKPLGPWTRDLLQRIEQLATWVEETYPRVYWLSGFTYPTGFLTAVLQTTARKASVPIDTLSFEFSIINLDEREINAPPKEGVYIKGLFLEGAGWDFENGCLCEPNPMELIVPMPILLFRPVENKKRTAKGIYTCPLYLYPLRTGTRERPSFMINVDLRSGSADPDHWIMRGTALLLSLAT</sequence>
<dbReference type="EMBL" id="AJ242523">
    <property type="protein sequence ID" value="CAB99316.1"/>
    <property type="molecule type" value="Genomic_DNA"/>
</dbReference>
<dbReference type="EMBL" id="AJ242524">
    <property type="protein sequence ID" value="CAB99316.1"/>
    <property type="status" value="JOINED"/>
    <property type="molecule type" value="Genomic_DNA"/>
</dbReference>
<dbReference type="EMBL" id="AJ242525">
    <property type="protein sequence ID" value="CAB99316.1"/>
    <property type="status" value="JOINED"/>
    <property type="molecule type" value="Genomic_DNA"/>
</dbReference>
<dbReference type="EMBL" id="AJ132799">
    <property type="protein sequence ID" value="CAB39160.1"/>
    <property type="molecule type" value="Genomic_DNA"/>
</dbReference>
<dbReference type="PDB" id="8GLV">
    <property type="method" value="EM"/>
    <property type="resolution" value="3.10 A"/>
    <property type="chains" value="Co=1-4513"/>
</dbReference>
<dbReference type="PDBsum" id="8GLV"/>
<dbReference type="EMDB" id="EMD-40220"/>
<dbReference type="SMR" id="Q9MBF8"/>
<dbReference type="PaxDb" id="3055-EDP03736"/>
<dbReference type="EnsemblPlants" id="PNW73250">
    <property type="protein sequence ID" value="PNW73250"/>
    <property type="gene ID" value="CHLRE_14g624950v5"/>
</dbReference>
<dbReference type="Gramene" id="PNW73250">
    <property type="protein sequence ID" value="PNW73250"/>
    <property type="gene ID" value="CHLRE_14g624950v5"/>
</dbReference>
<dbReference type="eggNOG" id="KOG3595">
    <property type="taxonomic scope" value="Eukaryota"/>
</dbReference>
<dbReference type="OMA" id="ILKNDMQ"/>
<dbReference type="OrthoDB" id="10251809at2759"/>
<dbReference type="GO" id="GO:0005930">
    <property type="term" value="C:axoneme"/>
    <property type="evidence" value="ECO:0000314"/>
    <property type="project" value="BHF-UCL"/>
</dbReference>
<dbReference type="GO" id="GO:0036156">
    <property type="term" value="C:inner dynein arm"/>
    <property type="evidence" value="ECO:0000314"/>
    <property type="project" value="GO_Central"/>
</dbReference>
<dbReference type="GO" id="GO:0005874">
    <property type="term" value="C:microtubule"/>
    <property type="evidence" value="ECO:0007669"/>
    <property type="project" value="UniProtKB-KW"/>
</dbReference>
<dbReference type="GO" id="GO:0031514">
    <property type="term" value="C:motile cilium"/>
    <property type="evidence" value="ECO:0007669"/>
    <property type="project" value="UniProtKB-SubCell"/>
</dbReference>
<dbReference type="GO" id="GO:0005524">
    <property type="term" value="F:ATP binding"/>
    <property type="evidence" value="ECO:0007669"/>
    <property type="project" value="UniProtKB-KW"/>
</dbReference>
<dbReference type="GO" id="GO:0016887">
    <property type="term" value="F:ATP hydrolysis activity"/>
    <property type="evidence" value="ECO:0007669"/>
    <property type="project" value="InterPro"/>
</dbReference>
<dbReference type="GO" id="GO:0045505">
    <property type="term" value="F:dynein intermediate chain binding"/>
    <property type="evidence" value="ECO:0007669"/>
    <property type="project" value="InterPro"/>
</dbReference>
<dbReference type="GO" id="GO:0051959">
    <property type="term" value="F:dynein light intermediate chain binding"/>
    <property type="evidence" value="ECO:0007669"/>
    <property type="project" value="InterPro"/>
</dbReference>
<dbReference type="GO" id="GO:0008017">
    <property type="term" value="F:microtubule binding"/>
    <property type="evidence" value="ECO:0000314"/>
    <property type="project" value="GO_Central"/>
</dbReference>
<dbReference type="GO" id="GO:0003777">
    <property type="term" value="F:microtubule motor activity"/>
    <property type="evidence" value="ECO:0000314"/>
    <property type="project" value="GO_Central"/>
</dbReference>
<dbReference type="GO" id="GO:0008569">
    <property type="term" value="F:minus-end-directed microtubule motor activity"/>
    <property type="evidence" value="ECO:0007669"/>
    <property type="project" value="InterPro"/>
</dbReference>
<dbReference type="GO" id="GO:0060294">
    <property type="term" value="P:cilium movement involved in cell motility"/>
    <property type="evidence" value="ECO:0000315"/>
    <property type="project" value="GO_Central"/>
</dbReference>
<dbReference type="GO" id="GO:0036159">
    <property type="term" value="P:inner dynein arm assembly"/>
    <property type="evidence" value="ECO:0000315"/>
    <property type="project" value="GO_Central"/>
</dbReference>
<dbReference type="FunFam" id="3.40.50.300:FF:000153">
    <property type="entry name" value="Dynein axonemal heavy chain 1"/>
    <property type="match status" value="1"/>
</dbReference>
<dbReference type="FunFam" id="1.10.8.710:FF:000001">
    <property type="entry name" value="Dynein axonemal heavy chain 2"/>
    <property type="match status" value="1"/>
</dbReference>
<dbReference type="FunFam" id="1.10.8.720:FF:000008">
    <property type="entry name" value="Dynein axonemal heavy chain 2"/>
    <property type="match status" value="1"/>
</dbReference>
<dbReference type="FunFam" id="1.10.8.1220:FF:000001">
    <property type="entry name" value="Dynein axonemal heavy chain 5"/>
    <property type="match status" value="1"/>
</dbReference>
<dbReference type="FunFam" id="3.20.180.20:FF:000001">
    <property type="entry name" value="Dynein axonemal heavy chain 5"/>
    <property type="match status" value="1"/>
</dbReference>
<dbReference type="FunFam" id="3.40.50.300:FF:002141">
    <property type="entry name" value="Dynein heavy chain"/>
    <property type="match status" value="1"/>
</dbReference>
<dbReference type="FunFam" id="1.10.287.2620:FF:000002">
    <property type="entry name" value="Dynein heavy chain 2, axonemal"/>
    <property type="match status" value="1"/>
</dbReference>
<dbReference type="FunFam" id="3.40.50.300:FF:000815">
    <property type="entry name" value="Dynein heavy chain 2, axonemal"/>
    <property type="match status" value="1"/>
</dbReference>
<dbReference type="FunFam" id="1.20.140.100:FF:000006">
    <property type="entry name" value="dynein heavy chain 2, axonemal"/>
    <property type="match status" value="1"/>
</dbReference>
<dbReference type="FunFam" id="1.20.58.1120:FF:000001">
    <property type="entry name" value="dynein heavy chain 2, axonemal"/>
    <property type="match status" value="1"/>
</dbReference>
<dbReference type="FunFam" id="1.20.920.20:FF:000001">
    <property type="entry name" value="dynein heavy chain 2, axonemal"/>
    <property type="match status" value="1"/>
</dbReference>
<dbReference type="FunFam" id="3.10.490.20:FF:000008">
    <property type="entry name" value="dynein heavy chain 2, axonemal"/>
    <property type="match status" value="1"/>
</dbReference>
<dbReference type="FunFam" id="3.40.50.300:FF:000044">
    <property type="entry name" value="Dynein heavy chain 5, axonemal"/>
    <property type="match status" value="1"/>
</dbReference>
<dbReference type="FunFam" id="1.20.920.30:FF:000009">
    <property type="entry name" value="Dynein heavy chain 9"/>
    <property type="match status" value="1"/>
</dbReference>
<dbReference type="FunFam" id="3.40.50.300:FF:000049">
    <property type="entry name" value="Dynein, axonemal, heavy chain 5"/>
    <property type="match status" value="1"/>
</dbReference>
<dbReference type="FunFam" id="1.20.1270.280:FF:000023">
    <property type="entry name" value="Dynein-1-beta heavy chain, flagellar inner arm I1 complex"/>
    <property type="match status" value="1"/>
</dbReference>
<dbReference type="Gene3D" id="1.10.287.2620">
    <property type="match status" value="1"/>
</dbReference>
<dbReference type="Gene3D" id="1.10.472.130">
    <property type="match status" value="1"/>
</dbReference>
<dbReference type="Gene3D" id="1.10.8.1220">
    <property type="match status" value="1"/>
</dbReference>
<dbReference type="Gene3D" id="1.10.8.710">
    <property type="match status" value="1"/>
</dbReference>
<dbReference type="Gene3D" id="1.20.1270.280">
    <property type="match status" value="1"/>
</dbReference>
<dbReference type="Gene3D" id="1.20.58.1120">
    <property type="match status" value="1"/>
</dbReference>
<dbReference type="Gene3D" id="1.20.920.20">
    <property type="match status" value="1"/>
</dbReference>
<dbReference type="Gene3D" id="1.20.920.30">
    <property type="match status" value="1"/>
</dbReference>
<dbReference type="Gene3D" id="3.10.490.20">
    <property type="match status" value="1"/>
</dbReference>
<dbReference type="Gene3D" id="6.10.140.1060">
    <property type="match status" value="1"/>
</dbReference>
<dbReference type="Gene3D" id="1.20.140.100">
    <property type="entry name" value="Dynein heavy chain, N-terminal domain 2"/>
    <property type="match status" value="1"/>
</dbReference>
<dbReference type="Gene3D" id="3.20.180.20">
    <property type="entry name" value="Dynein heavy chain, N-terminal domain 2"/>
    <property type="match status" value="1"/>
</dbReference>
<dbReference type="Gene3D" id="3.40.50.300">
    <property type="entry name" value="P-loop containing nucleotide triphosphate hydrolases"/>
    <property type="match status" value="5"/>
</dbReference>
<dbReference type="Gene3D" id="1.10.8.720">
    <property type="entry name" value="Region D6 of dynein motor"/>
    <property type="match status" value="1"/>
</dbReference>
<dbReference type="InterPro" id="IPR003593">
    <property type="entry name" value="AAA+_ATPase"/>
</dbReference>
<dbReference type="InterPro" id="IPR035699">
    <property type="entry name" value="AAA_6"/>
</dbReference>
<dbReference type="InterPro" id="IPR035706">
    <property type="entry name" value="AAA_9"/>
</dbReference>
<dbReference type="InterPro" id="IPR041658">
    <property type="entry name" value="AAA_lid_11"/>
</dbReference>
<dbReference type="InterPro" id="IPR042219">
    <property type="entry name" value="AAA_lid_11_sf"/>
</dbReference>
<dbReference type="InterPro" id="IPR026983">
    <property type="entry name" value="DHC"/>
</dbReference>
<dbReference type="InterPro" id="IPR056759">
    <property type="entry name" value="DYH2-5-8_CC"/>
</dbReference>
<dbReference type="InterPro" id="IPR054354">
    <property type="entry name" value="DYNC2H1-like_lid"/>
</dbReference>
<dbReference type="InterPro" id="IPR042222">
    <property type="entry name" value="Dynein_2_N"/>
</dbReference>
<dbReference type="InterPro" id="IPR043157">
    <property type="entry name" value="Dynein_AAA1S"/>
</dbReference>
<dbReference type="InterPro" id="IPR041466">
    <property type="entry name" value="Dynein_AAA5_ext"/>
</dbReference>
<dbReference type="InterPro" id="IPR041228">
    <property type="entry name" value="Dynein_C"/>
</dbReference>
<dbReference type="InterPro" id="IPR043160">
    <property type="entry name" value="Dynein_C_barrel"/>
</dbReference>
<dbReference type="InterPro" id="IPR024743">
    <property type="entry name" value="Dynein_HC_stalk"/>
</dbReference>
<dbReference type="InterPro" id="IPR024317">
    <property type="entry name" value="Dynein_heavy_chain_D4_dom"/>
</dbReference>
<dbReference type="InterPro" id="IPR004273">
    <property type="entry name" value="Dynein_heavy_D6_P-loop"/>
</dbReference>
<dbReference type="InterPro" id="IPR013602">
    <property type="entry name" value="Dynein_heavy_linker"/>
</dbReference>
<dbReference type="InterPro" id="IPR013594">
    <property type="entry name" value="Dynein_heavy_tail"/>
</dbReference>
<dbReference type="InterPro" id="IPR042228">
    <property type="entry name" value="Dynein_linker_3"/>
</dbReference>
<dbReference type="InterPro" id="IPR027417">
    <property type="entry name" value="P-loop_NTPase"/>
</dbReference>
<dbReference type="PANTHER" id="PTHR45703">
    <property type="entry name" value="DYNEIN HEAVY CHAIN"/>
    <property type="match status" value="1"/>
</dbReference>
<dbReference type="PANTHER" id="PTHR45703:SF32">
    <property type="entry name" value="DYNEINS HEAVY CHAIN"/>
    <property type="match status" value="1"/>
</dbReference>
<dbReference type="Pfam" id="PF12774">
    <property type="entry name" value="AAA_6"/>
    <property type="match status" value="1"/>
</dbReference>
<dbReference type="Pfam" id="PF12775">
    <property type="entry name" value="AAA_7"/>
    <property type="match status" value="1"/>
</dbReference>
<dbReference type="Pfam" id="PF12780">
    <property type="entry name" value="AAA_8"/>
    <property type="match status" value="1"/>
</dbReference>
<dbReference type="Pfam" id="PF12781">
    <property type="entry name" value="AAA_9"/>
    <property type="match status" value="1"/>
</dbReference>
<dbReference type="Pfam" id="PF18198">
    <property type="entry name" value="AAA_lid_11"/>
    <property type="match status" value="1"/>
</dbReference>
<dbReference type="Pfam" id="PF08385">
    <property type="entry name" value="DHC_N1"/>
    <property type="match status" value="1"/>
</dbReference>
<dbReference type="Pfam" id="PF08393">
    <property type="entry name" value="DHC_N2"/>
    <property type="match status" value="1"/>
</dbReference>
<dbReference type="Pfam" id="PF25007">
    <property type="entry name" value="DYH2-5-8_CC"/>
    <property type="match status" value="1"/>
</dbReference>
<dbReference type="Pfam" id="PF22597">
    <property type="entry name" value="DYN_lid"/>
    <property type="match status" value="1"/>
</dbReference>
<dbReference type="Pfam" id="PF17852">
    <property type="entry name" value="Dynein_AAA_lid"/>
    <property type="match status" value="1"/>
</dbReference>
<dbReference type="Pfam" id="PF18199">
    <property type="entry name" value="Dynein_C"/>
    <property type="match status" value="1"/>
</dbReference>
<dbReference type="Pfam" id="PF03028">
    <property type="entry name" value="Dynein_heavy"/>
    <property type="match status" value="1"/>
</dbReference>
<dbReference type="Pfam" id="PF12777">
    <property type="entry name" value="MT"/>
    <property type="match status" value="1"/>
</dbReference>
<dbReference type="SMART" id="SM00382">
    <property type="entry name" value="AAA"/>
    <property type="match status" value="3"/>
</dbReference>
<dbReference type="SUPFAM" id="SSF90257">
    <property type="entry name" value="Myosin rod fragments"/>
    <property type="match status" value="1"/>
</dbReference>
<dbReference type="SUPFAM" id="SSF52540">
    <property type="entry name" value="P-loop containing nucleoside triphosphate hydrolases"/>
    <property type="match status" value="4"/>
</dbReference>
<accession>Q9MBF8</accession>
<accession>Q9ZPC2</accession>
<keyword id="KW-0002">3D-structure</keyword>
<keyword id="KW-0067">ATP-binding</keyword>
<keyword id="KW-0966">Cell projection</keyword>
<keyword id="KW-0969">Cilium</keyword>
<keyword id="KW-0970">Cilium biogenesis/degradation</keyword>
<keyword id="KW-0175">Coiled coil</keyword>
<keyword id="KW-0963">Cytoplasm</keyword>
<keyword id="KW-0206">Cytoskeleton</keyword>
<keyword id="KW-0243">Dynein</keyword>
<keyword id="KW-0282">Flagellum</keyword>
<keyword id="KW-0493">Microtubule</keyword>
<keyword id="KW-0505">Motor protein</keyword>
<keyword id="KW-0547">Nucleotide-binding</keyword>
<keyword id="KW-0677">Repeat</keyword>
<proteinExistence type="evidence at protein level"/>
<reference key="1">
    <citation type="journal article" date="2000" name="Mol. Biol. Cell">
        <title>Insights into the structural organization of the I1 inner arm dynein from a domain analysis of the 1 beta dynein heavy chain.</title>
        <authorList>
            <person name="Perrone C.A."/>
            <person name="Myster S.H."/>
            <person name="Bower R."/>
            <person name="O'Toole E.T."/>
            <person name="Porter M.E."/>
        </authorList>
    </citation>
    <scope>NUCLEOTIDE SEQUENCE [GENOMIC DNA]</scope>
    <scope>CHARACTERIZATION</scope>
    <scope>DISRUPTION PHENOTYPE</scope>
    <source>
        <strain>21gr / CC-1690</strain>
    </source>
</reference>
<reference key="2">
    <citation type="journal article" date="1999" name="Mol. Biol. Cell">
        <title>Cytoplasmic dynein heavy chain 1b is required for flagellar assembly in Chlamydomonas.</title>
        <authorList>
            <person name="Porter M.E."/>
            <person name="Bower R."/>
            <person name="Knott J.A."/>
            <person name="Byrd P."/>
            <person name="Dentler W.L."/>
        </authorList>
    </citation>
    <scope>NUCLEOTIDE SEQUENCE [GENOMIC DNA] OF 1820-1901</scope>
    <source>
        <strain>21gr / CC-1690</strain>
    </source>
</reference>
<reference key="3">
    <citation type="journal article" date="1987" name="J. Mol. Biol.">
        <title>High-pressure liquid chromatography fractionation of Chlamydomonas dynein extracts and characterization of inner-arm dynein subunits.</title>
        <authorList>
            <person name="Goodenough U.W."/>
            <person name="Gebhart B."/>
            <person name="Mermall V."/>
            <person name="Mitchell D.R."/>
            <person name="Heuser J.E."/>
        </authorList>
    </citation>
    <scope>DYNEIN COMPLEX ELECTRON MICROSCOPY</scope>
    <source>
        <strain>CC-620</strain>
    </source>
</reference>
<reference key="4">
    <citation type="journal article" date="1990" name="J. Cell Biol.">
        <title>Three distinct inner dynein arms in Chlamydomonas flagella: molecular composition and location in the axoneme.</title>
        <authorList>
            <person name="Piperno G."/>
            <person name="Ramanis Z."/>
            <person name="Smith E.F."/>
            <person name="Sale W.S."/>
        </authorList>
    </citation>
    <scope>SUBUNIT</scope>
</reference>
<reference key="5">
    <citation type="journal article" date="1997" name="J. Cell Biol.">
        <title>Phosphoregulation of an inner dynein arm complex in Chlamydomonas reinhardtii is altered in phototactic mutant strains.</title>
        <authorList>
            <person name="King S.J."/>
            <person name="Dutcher S.K."/>
        </authorList>
    </citation>
    <scope>REQUIREMENT OF I1 DYNEIN COMPLEX FOR PHOTOTAXIS</scope>
    <scope>DISRUPTION PHENOTYPE</scope>
</reference>
<feature type="chain" id="PRO_0000114647" description="Dynein-1-beta heavy chain, flagellar inner arm I1 complex">
    <location>
        <begin position="1"/>
        <end position="4513"/>
    </location>
</feature>
<feature type="region of interest" description="Stem" evidence="1">
    <location>
        <begin position="1"/>
        <end position="1806"/>
    </location>
</feature>
<feature type="region of interest" description="AAA 1" evidence="1">
    <location>
        <begin position="1807"/>
        <end position="2028"/>
    </location>
</feature>
<feature type="region of interest" description="AAA 2" evidence="1">
    <location>
        <begin position="2089"/>
        <end position="2350"/>
    </location>
</feature>
<feature type="region of interest" description="AAA 3" evidence="1">
    <location>
        <begin position="2458"/>
        <end position="2706"/>
    </location>
</feature>
<feature type="region of interest" description="AAA 4" evidence="1">
    <location>
        <begin position="2808"/>
        <end position="3059"/>
    </location>
</feature>
<feature type="region of interest" description="Stalk" evidence="1">
    <location>
        <begin position="3107"/>
        <end position="3384"/>
    </location>
</feature>
<feature type="region of interest" description="AAA 5" evidence="1">
    <location>
        <begin position="3443"/>
        <end position="3674"/>
    </location>
</feature>
<feature type="region of interest" description="AAA 6" evidence="1">
    <location>
        <begin position="3890"/>
        <end position="4109"/>
    </location>
</feature>
<feature type="coiled-coil region" evidence="2">
    <location>
        <begin position="192"/>
        <end position="223"/>
    </location>
</feature>
<feature type="coiled-coil region" evidence="2">
    <location>
        <begin position="1544"/>
        <end position="1577"/>
    </location>
</feature>
<feature type="coiled-coil region" evidence="2">
    <location>
        <begin position="1704"/>
        <end position="1727"/>
    </location>
</feature>
<feature type="coiled-coil region" evidence="2">
    <location>
        <begin position="3107"/>
        <end position="3193"/>
    </location>
</feature>
<feature type="coiled-coil region" evidence="2">
    <location>
        <begin position="3301"/>
        <end position="3384"/>
    </location>
</feature>
<feature type="coiled-coil region" evidence="2">
    <location>
        <begin position="3499"/>
        <end position="3519"/>
    </location>
</feature>
<feature type="binding site" evidence="2">
    <location>
        <begin position="1845"/>
        <end position="1852"/>
    </location>
    <ligand>
        <name>ATP</name>
        <dbReference type="ChEBI" id="CHEBI:30616"/>
    </ligand>
</feature>
<feature type="binding site" evidence="2">
    <location>
        <begin position="2127"/>
        <end position="2134"/>
    </location>
    <ligand>
        <name>ATP</name>
        <dbReference type="ChEBI" id="CHEBI:30616"/>
    </ligand>
</feature>
<feature type="binding site" evidence="2">
    <location>
        <begin position="2497"/>
        <end position="2504"/>
    </location>
    <ligand>
        <name>ATP</name>
        <dbReference type="ChEBI" id="CHEBI:30616"/>
    </ligand>
</feature>
<feature type="binding site" evidence="2">
    <location>
        <begin position="2848"/>
        <end position="2855"/>
    </location>
    <ligand>
        <name>ATP</name>
        <dbReference type="ChEBI" id="CHEBI:30616"/>
    </ligand>
</feature>
<organism>
    <name type="scientific">Chlamydomonas reinhardtii</name>
    <name type="common">Chlamydomonas smithii</name>
    <dbReference type="NCBI Taxonomy" id="3055"/>
    <lineage>
        <taxon>Eukaryota</taxon>
        <taxon>Viridiplantae</taxon>
        <taxon>Chlorophyta</taxon>
        <taxon>core chlorophytes</taxon>
        <taxon>Chlorophyceae</taxon>
        <taxon>CS clade</taxon>
        <taxon>Chlamydomonadales</taxon>
        <taxon>Chlamydomonadaceae</taxon>
        <taxon>Chlamydomonas</taxon>
    </lineage>
</organism>
<name>DYH1B_CHLRE</name>
<comment type="function">
    <text>Force generating protein of eukaryotic cilia and flagella. Produces force towards the minus ends of microtubules. Dynein has ATPase activity; the force-producing power stroke is thought to occur on release of ADP. Required for assembly of the I1 inner arm complex and its targeting to the appropriate axoneme location. Also required for phototaxis.</text>
</comment>
<comment type="subunit">
    <text evidence="4">The I1 inner arm complex (also known as the f dynein complex) is a two-headed isoform composed of two heavy chains (1-alpha and 1-beta), three intermediate chains and three light chains. I1 occupies a specific position proximal to the first radial spoke and repeats every 96 nm along the length of the axoneme.</text>
</comment>
<comment type="subcellular location">
    <subcellularLocation>
        <location>Cell projection</location>
        <location>Cilium</location>
        <location>Flagellum</location>
    </subcellularLocation>
    <subcellularLocation>
        <location>Cytoplasm</location>
        <location>Cytoskeleton</location>
        <location>Flagellum axoneme</location>
    </subcellularLocation>
</comment>
<comment type="induction">
    <text>By deflagellation.</text>
</comment>
<comment type="domain">
    <text>Dynein heavy chains probably consist of an N-terminal stem (which binds cargo and interacts with other dynein components), and the head or motor domain. The motor contains six tandemly-linked AAA domains in the head, which form a ring. A stalk-like structure (formed by two of the coiled coil domains) protrudes between AAA 4 and AAA 5 and terminates in a microtubule-binding site. A seventh domain may also contribute to this ring; it is not clear whether the N-terminus or the C-terminus forms this extra domain. There are four well-conserved and two non-conserved ATPase sites, one per AAA domain. Probably only one of these (within AAA 1) actually hydrolyzes ATP, the others may serve a regulatory function.</text>
</comment>
<comment type="domain">
    <text>A construct encoding the first 989 amino acids but lacking the motor domain is able to assemble I1 complexes and target them to their correct location on the axoneme, partially restores motility and fully rescue phototaxis.</text>
</comment>
<comment type="disruption phenotype">
    <text evidence="3 5">Cells swim slowly with aberrant waveforms, and are unable to phototax.</text>
</comment>